<dbReference type="EMBL" id="AC068667">
    <property type="protein sequence ID" value="AAG51739.1"/>
    <property type="status" value="ALT_SEQ"/>
    <property type="molecule type" value="Genomic_DNA"/>
</dbReference>
<dbReference type="EMBL" id="CP002684">
    <property type="protein sequence ID" value="AEE31081.1"/>
    <property type="molecule type" value="Genomic_DNA"/>
</dbReference>
<dbReference type="EMBL" id="AK118801">
    <property type="protein sequence ID" value="BAC43391.1"/>
    <property type="molecule type" value="mRNA"/>
</dbReference>
<dbReference type="EMBL" id="AY045942">
    <property type="protein sequence ID" value="AAK76616.1"/>
    <property type="molecule type" value="mRNA"/>
</dbReference>
<dbReference type="EMBL" id="AY133821">
    <property type="protein sequence ID" value="AAM91755.1"/>
    <property type="molecule type" value="mRNA"/>
</dbReference>
<dbReference type="EMBL" id="AY087022">
    <property type="protein sequence ID" value="AAM64583.1"/>
    <property type="molecule type" value="mRNA"/>
</dbReference>
<dbReference type="PIR" id="E86416">
    <property type="entry name" value="E86416"/>
</dbReference>
<dbReference type="RefSeq" id="NP_564328.1">
    <property type="nucleotide sequence ID" value="NM_102679.6"/>
</dbReference>
<dbReference type="FunCoup" id="Q94AL8">
    <property type="interactions" value="233"/>
</dbReference>
<dbReference type="STRING" id="3702.Q94AL8"/>
<dbReference type="TCDB" id="9.B.166.1.1">
    <property type="family name" value="the chloroplastic cold-regulated 413 inner membrane protein 1, cor413im1 (cor413im1) family"/>
</dbReference>
<dbReference type="PaxDb" id="3702-AT1G29395.1"/>
<dbReference type="EnsemblPlants" id="AT1G29395.1">
    <property type="protein sequence ID" value="AT1G29395.1"/>
    <property type="gene ID" value="AT1G29395"/>
</dbReference>
<dbReference type="GeneID" id="839815"/>
<dbReference type="Gramene" id="AT1G29395.1">
    <property type="protein sequence ID" value="AT1G29395.1"/>
    <property type="gene ID" value="AT1G29395"/>
</dbReference>
<dbReference type="KEGG" id="ath:AT1G29395"/>
<dbReference type="Araport" id="AT1G29395"/>
<dbReference type="TAIR" id="AT1G29395">
    <property type="gene designation" value="COR413IM1"/>
</dbReference>
<dbReference type="eggNOG" id="ENOG502RXZY">
    <property type="taxonomic scope" value="Eukaryota"/>
</dbReference>
<dbReference type="HOGENOM" id="CLU_106898_0_0_1"/>
<dbReference type="InParanoid" id="Q94AL8"/>
<dbReference type="OMA" id="YQATNLR"/>
<dbReference type="OrthoDB" id="1928310at2759"/>
<dbReference type="PhylomeDB" id="Q94AL8"/>
<dbReference type="PRO" id="PR:Q94AL8"/>
<dbReference type="Proteomes" id="UP000006548">
    <property type="component" value="Chromosome 1"/>
</dbReference>
<dbReference type="ExpressionAtlas" id="Q94AL8">
    <property type="expression patterns" value="baseline and differential"/>
</dbReference>
<dbReference type="GO" id="GO:0009507">
    <property type="term" value="C:chloroplast"/>
    <property type="evidence" value="ECO:0007005"/>
    <property type="project" value="TAIR"/>
</dbReference>
<dbReference type="GO" id="GO:0009941">
    <property type="term" value="C:chloroplast envelope"/>
    <property type="evidence" value="ECO:0000314"/>
    <property type="project" value="TAIR"/>
</dbReference>
<dbReference type="GO" id="GO:0009706">
    <property type="term" value="C:chloroplast inner membrane"/>
    <property type="evidence" value="ECO:0007669"/>
    <property type="project" value="UniProtKB-SubCell"/>
</dbReference>
<dbReference type="GO" id="GO:0009535">
    <property type="term" value="C:chloroplast thylakoid membrane"/>
    <property type="evidence" value="ECO:0000314"/>
    <property type="project" value="TAIR"/>
</dbReference>
<dbReference type="GO" id="GO:0070417">
    <property type="term" value="P:cellular response to cold"/>
    <property type="evidence" value="ECO:0000270"/>
    <property type="project" value="TAIR"/>
</dbReference>
<dbReference type="GO" id="GO:0042631">
    <property type="term" value="P:cellular response to water deprivation"/>
    <property type="evidence" value="ECO:0000270"/>
    <property type="project" value="TAIR"/>
</dbReference>
<dbReference type="GO" id="GO:0009631">
    <property type="term" value="P:cold acclimation"/>
    <property type="evidence" value="ECO:0000315"/>
    <property type="project" value="TAIR"/>
</dbReference>
<dbReference type="GO" id="GO:0009737">
    <property type="term" value="P:response to abscisic acid"/>
    <property type="evidence" value="ECO:0000270"/>
    <property type="project" value="TAIR"/>
</dbReference>
<dbReference type="InterPro" id="IPR008892">
    <property type="entry name" value="COR413"/>
</dbReference>
<dbReference type="PANTHER" id="PTHR33596:SF17">
    <property type="entry name" value="COLD-REGULATED 413 INNER MEMBRANE PROTEIN 1, CHLOROPLASTIC-RELATED"/>
    <property type="match status" value="1"/>
</dbReference>
<dbReference type="PANTHER" id="PTHR33596">
    <property type="entry name" value="COLD-REGULATED 413 PLASMA MEMBRANE PROTEIN 2"/>
    <property type="match status" value="1"/>
</dbReference>
<dbReference type="Pfam" id="PF05562">
    <property type="entry name" value="WCOR413"/>
    <property type="match status" value="1"/>
</dbReference>
<evidence type="ECO:0000255" key="1"/>
<evidence type="ECO:0000269" key="2">
    <source>
    </source>
</evidence>
<evidence type="ECO:0000269" key="3">
    <source>
    </source>
</evidence>
<evidence type="ECO:0000305" key="4"/>
<gene>
    <name type="primary">COR413IM1</name>
    <name type="synonym">COR413TM1</name>
    <name type="synonym">COR414TM1</name>
    <name type="ordered locus">At1g29395</name>
    <name type="ORF">F15D2.29</name>
</gene>
<sequence length="225" mass="24354">MASLCLSSSRIVSLHHQKPFLSLKLRSRPSDLSGLGRHTSPVCFNPLRLSGDRQRTATVSTRVEKRRKRGSSVVCYAAPISANSLQWISTISCLALMLARGTGIHKSVVVPLFALHAPSSIVAWIKGEYGVWAAFLALIARLFFTFPGELELPFIALLLVIVAPYQVMNIRGKQEGAIIAIAISGFLAFQHFSRAGSLEKAYEKGSVLATVAIIGVTVVSLLLLL</sequence>
<feature type="transit peptide" description="Chloroplast" evidence="3">
    <location>
        <begin position="1"/>
        <end position="76"/>
    </location>
</feature>
<feature type="chain" id="PRO_0000420444" description="Cold-regulated 413 inner membrane protein 1, chloroplastic">
    <location>
        <begin position="77"/>
        <end position="225"/>
    </location>
</feature>
<feature type="topological domain" description="Stromal" evidence="1">
    <location>
        <position position="77"/>
    </location>
</feature>
<feature type="transmembrane region" description="Helical" evidence="1">
    <location>
        <begin position="78"/>
        <end position="98"/>
    </location>
</feature>
<feature type="topological domain" description="Chloroplast intermembrane" evidence="1">
    <location>
        <begin position="99"/>
        <end position="102"/>
    </location>
</feature>
<feature type="transmembrane region" description="Helical" evidence="1">
    <location>
        <begin position="103"/>
        <end position="123"/>
    </location>
</feature>
<feature type="topological domain" description="Stromal" evidence="1">
    <location>
        <begin position="124"/>
        <end position="128"/>
    </location>
</feature>
<feature type="transmembrane region" description="Helical" evidence="1">
    <location>
        <begin position="129"/>
        <end position="149"/>
    </location>
</feature>
<feature type="topological domain" description="Chloroplast intermembrane" evidence="1">
    <location>
        <begin position="150"/>
        <end position="151"/>
    </location>
</feature>
<feature type="transmembrane region" description="Helical" evidence="1">
    <location>
        <begin position="152"/>
        <end position="172"/>
    </location>
</feature>
<feature type="topological domain" description="Stromal" evidence="1">
    <location>
        <begin position="173"/>
        <end position="175"/>
    </location>
</feature>
<feature type="transmembrane region" description="Helical" evidence="1">
    <location>
        <begin position="176"/>
        <end position="196"/>
    </location>
</feature>
<feature type="topological domain" description="Chloroplast intermembrane" evidence="1">
    <location>
        <begin position="197"/>
        <end position="204"/>
    </location>
</feature>
<feature type="transmembrane region" description="Helical" evidence="1">
    <location>
        <begin position="205"/>
        <end position="225"/>
    </location>
</feature>
<accession>Q94AL8</accession>
<accession>Q9C7R2</accession>
<proteinExistence type="evidence at protein level"/>
<keyword id="KW-0150">Chloroplast</keyword>
<keyword id="KW-0903">Direct protein sequencing</keyword>
<keyword id="KW-0472">Membrane</keyword>
<keyword id="KW-0934">Plastid</keyword>
<keyword id="KW-1001">Plastid inner membrane</keyword>
<keyword id="KW-1185">Reference proteome</keyword>
<keyword id="KW-0809">Transit peptide</keyword>
<keyword id="KW-0812">Transmembrane</keyword>
<keyword id="KW-1133">Transmembrane helix</keyword>
<organism>
    <name type="scientific">Arabidopsis thaliana</name>
    <name type="common">Mouse-ear cress</name>
    <dbReference type="NCBI Taxonomy" id="3702"/>
    <lineage>
        <taxon>Eukaryota</taxon>
        <taxon>Viridiplantae</taxon>
        <taxon>Streptophyta</taxon>
        <taxon>Embryophyta</taxon>
        <taxon>Tracheophyta</taxon>
        <taxon>Spermatophyta</taxon>
        <taxon>Magnoliopsida</taxon>
        <taxon>eudicotyledons</taxon>
        <taxon>Gunneridae</taxon>
        <taxon>Pentapetalae</taxon>
        <taxon>rosids</taxon>
        <taxon>malvids</taxon>
        <taxon>Brassicales</taxon>
        <taxon>Brassicaceae</taxon>
        <taxon>Camelineae</taxon>
        <taxon>Arabidopsis</taxon>
    </lineage>
</organism>
<reference key="1">
    <citation type="journal article" date="2000" name="Nature">
        <title>Sequence and analysis of chromosome 1 of the plant Arabidopsis thaliana.</title>
        <authorList>
            <person name="Theologis A."/>
            <person name="Ecker J.R."/>
            <person name="Palm C.J."/>
            <person name="Federspiel N.A."/>
            <person name="Kaul S."/>
            <person name="White O."/>
            <person name="Alonso J."/>
            <person name="Altafi H."/>
            <person name="Araujo R."/>
            <person name="Bowman C.L."/>
            <person name="Brooks S.Y."/>
            <person name="Buehler E."/>
            <person name="Chan A."/>
            <person name="Chao Q."/>
            <person name="Chen H."/>
            <person name="Cheuk R.F."/>
            <person name="Chin C.W."/>
            <person name="Chung M.K."/>
            <person name="Conn L."/>
            <person name="Conway A.B."/>
            <person name="Conway A.R."/>
            <person name="Creasy T.H."/>
            <person name="Dewar K."/>
            <person name="Dunn P."/>
            <person name="Etgu P."/>
            <person name="Feldblyum T.V."/>
            <person name="Feng J.-D."/>
            <person name="Fong B."/>
            <person name="Fujii C.Y."/>
            <person name="Gill J.E."/>
            <person name="Goldsmith A.D."/>
            <person name="Haas B."/>
            <person name="Hansen N.F."/>
            <person name="Hughes B."/>
            <person name="Huizar L."/>
            <person name="Hunter J.L."/>
            <person name="Jenkins J."/>
            <person name="Johnson-Hopson C."/>
            <person name="Khan S."/>
            <person name="Khaykin E."/>
            <person name="Kim C.J."/>
            <person name="Koo H.L."/>
            <person name="Kremenetskaia I."/>
            <person name="Kurtz D.B."/>
            <person name="Kwan A."/>
            <person name="Lam B."/>
            <person name="Langin-Hooper S."/>
            <person name="Lee A."/>
            <person name="Lee J.M."/>
            <person name="Lenz C.A."/>
            <person name="Li J.H."/>
            <person name="Li Y.-P."/>
            <person name="Lin X."/>
            <person name="Liu S.X."/>
            <person name="Liu Z.A."/>
            <person name="Luros J.S."/>
            <person name="Maiti R."/>
            <person name="Marziali A."/>
            <person name="Militscher J."/>
            <person name="Miranda M."/>
            <person name="Nguyen M."/>
            <person name="Nierman W.C."/>
            <person name="Osborne B.I."/>
            <person name="Pai G."/>
            <person name="Peterson J."/>
            <person name="Pham P.K."/>
            <person name="Rizzo M."/>
            <person name="Rooney T."/>
            <person name="Rowley D."/>
            <person name="Sakano H."/>
            <person name="Salzberg S.L."/>
            <person name="Schwartz J.R."/>
            <person name="Shinn P."/>
            <person name="Southwick A.M."/>
            <person name="Sun H."/>
            <person name="Tallon L.J."/>
            <person name="Tambunga G."/>
            <person name="Toriumi M.J."/>
            <person name="Town C.D."/>
            <person name="Utterback T."/>
            <person name="Van Aken S."/>
            <person name="Vaysberg M."/>
            <person name="Vysotskaia V.S."/>
            <person name="Walker M."/>
            <person name="Wu D."/>
            <person name="Yu G."/>
            <person name="Fraser C.M."/>
            <person name="Venter J.C."/>
            <person name="Davis R.W."/>
        </authorList>
    </citation>
    <scope>NUCLEOTIDE SEQUENCE [LARGE SCALE GENOMIC DNA]</scope>
    <source>
        <strain>cv. Columbia</strain>
    </source>
</reference>
<reference key="2">
    <citation type="journal article" date="2017" name="Plant J.">
        <title>Araport11: a complete reannotation of the Arabidopsis thaliana reference genome.</title>
        <authorList>
            <person name="Cheng C.Y."/>
            <person name="Krishnakumar V."/>
            <person name="Chan A.P."/>
            <person name="Thibaud-Nissen F."/>
            <person name="Schobel S."/>
            <person name="Town C.D."/>
        </authorList>
    </citation>
    <scope>GENOME REANNOTATION</scope>
    <source>
        <strain>cv. Columbia</strain>
    </source>
</reference>
<reference key="3">
    <citation type="journal article" date="2002" name="Science">
        <title>Functional annotation of a full-length Arabidopsis cDNA collection.</title>
        <authorList>
            <person name="Seki M."/>
            <person name="Narusaka M."/>
            <person name="Kamiya A."/>
            <person name="Ishida J."/>
            <person name="Satou M."/>
            <person name="Sakurai T."/>
            <person name="Nakajima M."/>
            <person name="Enju A."/>
            <person name="Akiyama K."/>
            <person name="Oono Y."/>
            <person name="Muramatsu M."/>
            <person name="Hayashizaki Y."/>
            <person name="Kawai J."/>
            <person name="Carninci P."/>
            <person name="Itoh M."/>
            <person name="Ishii Y."/>
            <person name="Arakawa T."/>
            <person name="Shibata K."/>
            <person name="Shinagawa A."/>
            <person name="Shinozaki K."/>
        </authorList>
    </citation>
    <scope>NUCLEOTIDE SEQUENCE [LARGE SCALE MRNA]</scope>
    <source>
        <strain>cv. Columbia</strain>
    </source>
</reference>
<reference key="4">
    <citation type="journal article" date="2003" name="Science">
        <title>Empirical analysis of transcriptional activity in the Arabidopsis genome.</title>
        <authorList>
            <person name="Yamada K."/>
            <person name="Lim J."/>
            <person name="Dale J.M."/>
            <person name="Chen H."/>
            <person name="Shinn P."/>
            <person name="Palm C.J."/>
            <person name="Southwick A.M."/>
            <person name="Wu H.C."/>
            <person name="Kim C.J."/>
            <person name="Nguyen M."/>
            <person name="Pham P.K."/>
            <person name="Cheuk R.F."/>
            <person name="Karlin-Newmann G."/>
            <person name="Liu S.X."/>
            <person name="Lam B."/>
            <person name="Sakano H."/>
            <person name="Wu T."/>
            <person name="Yu G."/>
            <person name="Miranda M."/>
            <person name="Quach H.L."/>
            <person name="Tripp M."/>
            <person name="Chang C.H."/>
            <person name="Lee J.M."/>
            <person name="Toriumi M.J."/>
            <person name="Chan M.M."/>
            <person name="Tang C.C."/>
            <person name="Onodera C.S."/>
            <person name="Deng J.M."/>
            <person name="Akiyama K."/>
            <person name="Ansari Y."/>
            <person name="Arakawa T."/>
            <person name="Banh J."/>
            <person name="Banno F."/>
            <person name="Bowser L."/>
            <person name="Brooks S.Y."/>
            <person name="Carninci P."/>
            <person name="Chao Q."/>
            <person name="Choy N."/>
            <person name="Enju A."/>
            <person name="Goldsmith A.D."/>
            <person name="Gurjal M."/>
            <person name="Hansen N.F."/>
            <person name="Hayashizaki Y."/>
            <person name="Johnson-Hopson C."/>
            <person name="Hsuan V.W."/>
            <person name="Iida K."/>
            <person name="Karnes M."/>
            <person name="Khan S."/>
            <person name="Koesema E."/>
            <person name="Ishida J."/>
            <person name="Jiang P.X."/>
            <person name="Jones T."/>
            <person name="Kawai J."/>
            <person name="Kamiya A."/>
            <person name="Meyers C."/>
            <person name="Nakajima M."/>
            <person name="Narusaka M."/>
            <person name="Seki M."/>
            <person name="Sakurai T."/>
            <person name="Satou M."/>
            <person name="Tamse R."/>
            <person name="Vaysberg M."/>
            <person name="Wallender E.K."/>
            <person name="Wong C."/>
            <person name="Yamamura Y."/>
            <person name="Yuan S."/>
            <person name="Shinozaki K."/>
            <person name="Davis R.W."/>
            <person name="Theologis A."/>
            <person name="Ecker J.R."/>
        </authorList>
    </citation>
    <scope>NUCLEOTIDE SEQUENCE [LARGE SCALE MRNA]</scope>
    <source>
        <strain>cv. Columbia</strain>
    </source>
</reference>
<reference key="5">
    <citation type="submission" date="2002-03" db="EMBL/GenBank/DDBJ databases">
        <title>Full-length cDNA from Arabidopsis thaliana.</title>
        <authorList>
            <person name="Brover V.V."/>
            <person name="Troukhan M.E."/>
            <person name="Alexandrov N.A."/>
            <person name="Lu Y.-P."/>
            <person name="Flavell R.B."/>
            <person name="Feldmann K.A."/>
        </authorList>
    </citation>
    <scope>NUCLEOTIDE SEQUENCE [LARGE SCALE MRNA]</scope>
</reference>
<reference key="6">
    <citation type="journal article" date="2008" name="Plant Cell Environ.">
        <title>Identification and characterization of Cor413im proteins as novel components of the chloroplast inner envelope.</title>
        <authorList>
            <person name="Okawa K."/>
            <person name="Nakayama K."/>
            <person name="Kakizaki T."/>
            <person name="Yamashita T."/>
            <person name="Inaba T."/>
        </authorList>
    </citation>
    <scope>PROTEIN SEQUENCE OF 77-83</scope>
    <scope>TRANSIT PEPTIDE CLEAVAGE SITE</scope>
    <scope>TOPOLOGY</scope>
    <scope>SUBCELLULAR LOCATION</scope>
    <scope>INDUCTION BY COLD</scope>
</reference>
<reference key="7">
    <citation type="journal article" date="2003" name="Plant Physiol.">
        <title>Expression profiling and bioinformatic analyses of a novel stress-regulated multispanning transmembrane protein family from cereals and Arabidopsis.</title>
        <authorList>
            <person name="Breton G."/>
            <person name="Danyluk J."/>
            <person name="Charron J.-B.F."/>
            <person name="Sarhan F."/>
        </authorList>
    </citation>
    <scope>INDUCTION BY ABSCISIC ACID; FREEZING AND DROUGHT</scope>
    <scope>GENE FAMILY</scope>
    <scope>NOMENCLATURE</scope>
</reference>
<protein>
    <recommendedName>
        <fullName>Cold-regulated 413 inner membrane protein 1, chloroplastic</fullName>
        <shortName>AtCOR413-IM1</shortName>
    </recommendedName>
    <alternativeName>
        <fullName>Cold-regulated 413 thylakoid membrane 1</fullName>
        <shortName>AtCOR413-TM1</shortName>
    </alternativeName>
</protein>
<comment type="subcellular location">
    <subcellularLocation>
        <location evidence="3">Plastid</location>
        <location evidence="3">Chloroplast inner membrane</location>
        <topology evidence="3">Multi-pass membrane protein</topology>
    </subcellularLocation>
</comment>
<comment type="induction">
    <text evidence="2 3">Accumulates in response to abscisic acid (ABA), cold, freezing and drought treatments.</text>
</comment>
<comment type="similarity">
    <text evidence="4">Belongs to the Cold-regulated 413 protein family.</text>
</comment>
<comment type="sequence caution" evidence="4">
    <conflict type="erroneous gene model prediction">
        <sequence resource="EMBL-CDS" id="AAG51739"/>
    </conflict>
</comment>
<name>CRIM1_ARATH</name>